<sequence>MKRAVVVFSGGQDSTTCLVQALQQYDEVHCVTFDYGQRHRAEIDVARELALKLGARAHKVLDVTLLNELAVSSLTRDSIPVPDYEPEADGIPNTFVPGRNILFLTLAAIYAYQVKAEAVITGVCETDFSGYPDCRDEFVKVLNHAVSLGMAKDIRFETPLMWIDKAETWALADYYGKLDLVRNETLTCYNGIKGDGCGHCAACNLRANGLNHYLADKPTVMAAMKQKTGLK</sequence>
<accession>B5Z3V1</accession>
<reference key="1">
    <citation type="journal article" date="2011" name="Proc. Natl. Acad. Sci. U.S.A.">
        <title>Genomic anatomy of Escherichia coli O157:H7 outbreaks.</title>
        <authorList>
            <person name="Eppinger M."/>
            <person name="Mammel M.K."/>
            <person name="Leclerc J.E."/>
            <person name="Ravel J."/>
            <person name="Cebula T.A."/>
        </authorList>
    </citation>
    <scope>NUCLEOTIDE SEQUENCE [LARGE SCALE GENOMIC DNA]</scope>
    <source>
        <strain>EC4115 / EHEC</strain>
    </source>
</reference>
<protein>
    <recommendedName>
        <fullName evidence="1">7-cyano-7-deazaguanine synthase</fullName>
        <ecNumber evidence="1">6.3.4.20</ecNumber>
    </recommendedName>
    <alternativeName>
        <fullName evidence="1">7-cyano-7-carbaguanine synthase</fullName>
    </alternativeName>
    <alternativeName>
        <fullName evidence="1">PreQ(0) synthase</fullName>
    </alternativeName>
    <alternativeName>
        <fullName evidence="1">Queuosine biosynthesis protein QueC</fullName>
    </alternativeName>
</protein>
<gene>
    <name evidence="1" type="primary">queC</name>
    <name type="ordered locus">ECH74115_0530</name>
</gene>
<dbReference type="EC" id="6.3.4.20" evidence="1"/>
<dbReference type="EMBL" id="CP001164">
    <property type="protein sequence ID" value="ACI35333.1"/>
    <property type="molecule type" value="Genomic_DNA"/>
</dbReference>
<dbReference type="RefSeq" id="WP_000817243.1">
    <property type="nucleotide sequence ID" value="NC_011353.1"/>
</dbReference>
<dbReference type="SMR" id="B5Z3V1"/>
<dbReference type="KEGG" id="ecf:ECH74115_0530"/>
<dbReference type="HOGENOM" id="CLU_081854_0_0_6"/>
<dbReference type="UniPathway" id="UPA00391"/>
<dbReference type="GO" id="GO:0005524">
    <property type="term" value="F:ATP binding"/>
    <property type="evidence" value="ECO:0007669"/>
    <property type="project" value="UniProtKB-UniRule"/>
</dbReference>
<dbReference type="GO" id="GO:0016879">
    <property type="term" value="F:ligase activity, forming carbon-nitrogen bonds"/>
    <property type="evidence" value="ECO:0007669"/>
    <property type="project" value="UniProtKB-UniRule"/>
</dbReference>
<dbReference type="GO" id="GO:0008270">
    <property type="term" value="F:zinc ion binding"/>
    <property type="evidence" value="ECO:0007669"/>
    <property type="project" value="UniProtKB-UniRule"/>
</dbReference>
<dbReference type="GO" id="GO:0008616">
    <property type="term" value="P:queuosine biosynthetic process"/>
    <property type="evidence" value="ECO:0007669"/>
    <property type="project" value="UniProtKB-UniRule"/>
</dbReference>
<dbReference type="CDD" id="cd01995">
    <property type="entry name" value="QueC-like"/>
    <property type="match status" value="1"/>
</dbReference>
<dbReference type="FunFam" id="3.40.50.620:FF:000017">
    <property type="entry name" value="7-cyano-7-deazaguanine synthase"/>
    <property type="match status" value="1"/>
</dbReference>
<dbReference type="Gene3D" id="3.40.50.620">
    <property type="entry name" value="HUPs"/>
    <property type="match status" value="1"/>
</dbReference>
<dbReference type="HAMAP" id="MF_01633">
    <property type="entry name" value="QueC"/>
    <property type="match status" value="1"/>
</dbReference>
<dbReference type="InterPro" id="IPR018317">
    <property type="entry name" value="QueC"/>
</dbReference>
<dbReference type="InterPro" id="IPR014729">
    <property type="entry name" value="Rossmann-like_a/b/a_fold"/>
</dbReference>
<dbReference type="NCBIfam" id="TIGR00364">
    <property type="entry name" value="7-cyano-7-deazaguanine synthase QueC"/>
    <property type="match status" value="1"/>
</dbReference>
<dbReference type="NCBIfam" id="NF008317">
    <property type="entry name" value="PRK11106.1"/>
    <property type="match status" value="1"/>
</dbReference>
<dbReference type="PANTHER" id="PTHR42914">
    <property type="entry name" value="7-CYANO-7-DEAZAGUANINE SYNTHASE"/>
    <property type="match status" value="1"/>
</dbReference>
<dbReference type="PANTHER" id="PTHR42914:SF1">
    <property type="entry name" value="7-CYANO-7-DEAZAGUANINE SYNTHASE"/>
    <property type="match status" value="1"/>
</dbReference>
<dbReference type="Pfam" id="PF06508">
    <property type="entry name" value="QueC"/>
    <property type="match status" value="1"/>
</dbReference>
<dbReference type="PIRSF" id="PIRSF006293">
    <property type="entry name" value="ExsB"/>
    <property type="match status" value="1"/>
</dbReference>
<dbReference type="SUPFAM" id="SSF52402">
    <property type="entry name" value="Adenine nucleotide alpha hydrolases-like"/>
    <property type="match status" value="1"/>
</dbReference>
<keyword id="KW-0067">ATP-binding</keyword>
<keyword id="KW-0436">Ligase</keyword>
<keyword id="KW-0479">Metal-binding</keyword>
<keyword id="KW-0547">Nucleotide-binding</keyword>
<keyword id="KW-0671">Queuosine biosynthesis</keyword>
<keyword id="KW-0862">Zinc</keyword>
<comment type="function">
    <text evidence="1">Catalyzes the ATP-dependent conversion of 7-carboxy-7-deazaguanine (CDG) to 7-cyano-7-deazaguanine (preQ(0)).</text>
</comment>
<comment type="catalytic activity">
    <reaction evidence="1">
        <text>7-carboxy-7-deazaguanine + NH4(+) + ATP = 7-cyano-7-deazaguanine + ADP + phosphate + H2O + H(+)</text>
        <dbReference type="Rhea" id="RHEA:27982"/>
        <dbReference type="ChEBI" id="CHEBI:15377"/>
        <dbReference type="ChEBI" id="CHEBI:15378"/>
        <dbReference type="ChEBI" id="CHEBI:28938"/>
        <dbReference type="ChEBI" id="CHEBI:30616"/>
        <dbReference type="ChEBI" id="CHEBI:43474"/>
        <dbReference type="ChEBI" id="CHEBI:45075"/>
        <dbReference type="ChEBI" id="CHEBI:61036"/>
        <dbReference type="ChEBI" id="CHEBI:456216"/>
        <dbReference type="EC" id="6.3.4.20"/>
    </reaction>
</comment>
<comment type="cofactor">
    <cofactor evidence="1">
        <name>Zn(2+)</name>
        <dbReference type="ChEBI" id="CHEBI:29105"/>
    </cofactor>
    <text evidence="1">Binds 1 zinc ion per subunit.</text>
</comment>
<comment type="pathway">
    <text evidence="1">Purine metabolism; 7-cyano-7-deazaguanine biosynthesis.</text>
</comment>
<comment type="similarity">
    <text evidence="1">Belongs to the QueC family.</text>
</comment>
<evidence type="ECO:0000255" key="1">
    <source>
        <dbReference type="HAMAP-Rule" id="MF_01633"/>
    </source>
</evidence>
<proteinExistence type="inferred from homology"/>
<feature type="chain" id="PRO_1000186590" description="7-cyano-7-deazaguanine synthase">
    <location>
        <begin position="1"/>
        <end position="231"/>
    </location>
</feature>
<feature type="binding site" evidence="1">
    <location>
        <begin position="8"/>
        <end position="18"/>
    </location>
    <ligand>
        <name>ATP</name>
        <dbReference type="ChEBI" id="CHEBI:30616"/>
    </ligand>
</feature>
<feature type="binding site" evidence="1">
    <location>
        <position position="188"/>
    </location>
    <ligand>
        <name>Zn(2+)</name>
        <dbReference type="ChEBI" id="CHEBI:29105"/>
    </ligand>
</feature>
<feature type="binding site" evidence="1">
    <location>
        <position position="197"/>
    </location>
    <ligand>
        <name>Zn(2+)</name>
        <dbReference type="ChEBI" id="CHEBI:29105"/>
    </ligand>
</feature>
<feature type="binding site" evidence="1">
    <location>
        <position position="200"/>
    </location>
    <ligand>
        <name>Zn(2+)</name>
        <dbReference type="ChEBI" id="CHEBI:29105"/>
    </ligand>
</feature>
<feature type="binding site" evidence="1">
    <location>
        <position position="203"/>
    </location>
    <ligand>
        <name>Zn(2+)</name>
        <dbReference type="ChEBI" id="CHEBI:29105"/>
    </ligand>
</feature>
<name>QUEC_ECO5E</name>
<organism>
    <name type="scientific">Escherichia coli O157:H7 (strain EC4115 / EHEC)</name>
    <dbReference type="NCBI Taxonomy" id="444450"/>
    <lineage>
        <taxon>Bacteria</taxon>
        <taxon>Pseudomonadati</taxon>
        <taxon>Pseudomonadota</taxon>
        <taxon>Gammaproteobacteria</taxon>
        <taxon>Enterobacterales</taxon>
        <taxon>Enterobacteriaceae</taxon>
        <taxon>Escherichia</taxon>
    </lineage>
</organism>